<feature type="chain" id="PRO_1000050825" description="D-aminoacyl-tRNA deacylase">
    <location>
        <begin position="1"/>
        <end position="149"/>
    </location>
</feature>
<feature type="short sequence motif" description="Gly-cisPro motif, important for rejection of L-amino acids" evidence="1">
    <location>
        <begin position="137"/>
        <end position="138"/>
    </location>
</feature>
<reference key="1">
    <citation type="journal article" date="2007" name="Genome Res.">
        <title>Genome sequence of a proteolytic (Group I) Clostridium botulinum strain Hall A and comparative analysis of the clostridial genomes.</title>
        <authorList>
            <person name="Sebaihia M."/>
            <person name="Peck M.W."/>
            <person name="Minton N.P."/>
            <person name="Thomson N.R."/>
            <person name="Holden M.T.G."/>
            <person name="Mitchell W.J."/>
            <person name="Carter A.T."/>
            <person name="Bentley S.D."/>
            <person name="Mason D.R."/>
            <person name="Crossman L."/>
            <person name="Paul C.J."/>
            <person name="Ivens A."/>
            <person name="Wells-Bennik M.H.J."/>
            <person name="Davis I.J."/>
            <person name="Cerdeno-Tarraga A.M."/>
            <person name="Churcher C."/>
            <person name="Quail M.A."/>
            <person name="Chillingworth T."/>
            <person name="Feltwell T."/>
            <person name="Fraser A."/>
            <person name="Goodhead I."/>
            <person name="Hance Z."/>
            <person name="Jagels K."/>
            <person name="Larke N."/>
            <person name="Maddison M."/>
            <person name="Moule S."/>
            <person name="Mungall K."/>
            <person name="Norbertczak H."/>
            <person name="Rabbinowitsch E."/>
            <person name="Sanders M."/>
            <person name="Simmonds M."/>
            <person name="White B."/>
            <person name="Whithead S."/>
            <person name="Parkhill J."/>
        </authorList>
    </citation>
    <scope>NUCLEOTIDE SEQUENCE [LARGE SCALE GENOMIC DNA]</scope>
    <source>
        <strain>Hall / ATCC 3502 / NCTC 13319 / Type A</strain>
    </source>
</reference>
<reference key="2">
    <citation type="journal article" date="2007" name="PLoS ONE">
        <title>Analysis of the neurotoxin complex genes in Clostridium botulinum A1-A4 and B1 strains: BoNT/A3, /Ba4 and /B1 clusters are located within plasmids.</title>
        <authorList>
            <person name="Smith T.J."/>
            <person name="Hill K.K."/>
            <person name="Foley B.T."/>
            <person name="Detter J.C."/>
            <person name="Munk A.C."/>
            <person name="Bruce D.C."/>
            <person name="Doggett N.A."/>
            <person name="Smith L.A."/>
            <person name="Marks J.D."/>
            <person name="Xie G."/>
            <person name="Brettin T.S."/>
        </authorList>
    </citation>
    <scope>NUCLEOTIDE SEQUENCE [LARGE SCALE GENOMIC DNA]</scope>
    <source>
        <strain>Hall / ATCC 3502 / NCTC 13319 / Type A</strain>
    </source>
</reference>
<gene>
    <name evidence="1" type="primary">dtd</name>
    <name type="ordered locus">CBO3058</name>
    <name type="ordered locus">CLC_2960</name>
</gene>
<protein>
    <recommendedName>
        <fullName evidence="1">D-aminoacyl-tRNA deacylase</fullName>
        <shortName evidence="1">DTD</shortName>
        <ecNumber evidence="1">3.1.1.96</ecNumber>
    </recommendedName>
    <alternativeName>
        <fullName evidence="1">Gly-tRNA(Ala) deacylase</fullName>
    </alternativeName>
</protein>
<organism>
    <name type="scientific">Clostridium botulinum (strain Hall / ATCC 3502 / NCTC 13319 / Type A)</name>
    <dbReference type="NCBI Taxonomy" id="441771"/>
    <lineage>
        <taxon>Bacteria</taxon>
        <taxon>Bacillati</taxon>
        <taxon>Bacillota</taxon>
        <taxon>Clostridia</taxon>
        <taxon>Eubacteriales</taxon>
        <taxon>Clostridiaceae</taxon>
        <taxon>Clostridium</taxon>
    </lineage>
</organism>
<evidence type="ECO:0000255" key="1">
    <source>
        <dbReference type="HAMAP-Rule" id="MF_00518"/>
    </source>
</evidence>
<proteinExistence type="inferred from homology"/>
<accession>A5I6D9</accession>
<accession>A7G7M2</accession>
<comment type="function">
    <text evidence="1">An aminoacyl-tRNA editing enzyme that deacylates mischarged D-aminoacyl-tRNAs. Also deacylates mischarged glycyl-tRNA(Ala), protecting cells against glycine mischarging by AlaRS. Acts via tRNA-based rather than protein-based catalysis; rejects L-amino acids rather than detecting D-amino acids in the active site. By recycling D-aminoacyl-tRNA to D-amino acids and free tRNA molecules, this enzyme counteracts the toxicity associated with the formation of D-aminoacyl-tRNA entities in vivo and helps enforce protein L-homochirality.</text>
</comment>
<comment type="catalytic activity">
    <reaction evidence="1">
        <text>glycyl-tRNA(Ala) + H2O = tRNA(Ala) + glycine + H(+)</text>
        <dbReference type="Rhea" id="RHEA:53744"/>
        <dbReference type="Rhea" id="RHEA-COMP:9657"/>
        <dbReference type="Rhea" id="RHEA-COMP:13640"/>
        <dbReference type="ChEBI" id="CHEBI:15377"/>
        <dbReference type="ChEBI" id="CHEBI:15378"/>
        <dbReference type="ChEBI" id="CHEBI:57305"/>
        <dbReference type="ChEBI" id="CHEBI:78442"/>
        <dbReference type="ChEBI" id="CHEBI:78522"/>
        <dbReference type="EC" id="3.1.1.96"/>
    </reaction>
</comment>
<comment type="catalytic activity">
    <reaction evidence="1">
        <text>a D-aminoacyl-tRNA + H2O = a tRNA + a D-alpha-amino acid + H(+)</text>
        <dbReference type="Rhea" id="RHEA:13953"/>
        <dbReference type="Rhea" id="RHEA-COMP:10123"/>
        <dbReference type="Rhea" id="RHEA-COMP:10124"/>
        <dbReference type="ChEBI" id="CHEBI:15377"/>
        <dbReference type="ChEBI" id="CHEBI:15378"/>
        <dbReference type="ChEBI" id="CHEBI:59871"/>
        <dbReference type="ChEBI" id="CHEBI:78442"/>
        <dbReference type="ChEBI" id="CHEBI:79333"/>
        <dbReference type="EC" id="3.1.1.96"/>
    </reaction>
</comment>
<comment type="subunit">
    <text evidence="1">Homodimer.</text>
</comment>
<comment type="subcellular location">
    <subcellularLocation>
        <location evidence="1">Cytoplasm</location>
    </subcellularLocation>
</comment>
<comment type="domain">
    <text evidence="1">A Gly-cisPro motif from one monomer fits into the active site of the other monomer to allow specific chiral rejection of L-amino acids.</text>
</comment>
<comment type="similarity">
    <text evidence="1">Belongs to the DTD family.</text>
</comment>
<dbReference type="EC" id="3.1.1.96" evidence="1"/>
<dbReference type="EMBL" id="CP000727">
    <property type="protein sequence ID" value="ABS36406.1"/>
    <property type="molecule type" value="Genomic_DNA"/>
</dbReference>
<dbReference type="EMBL" id="AM412317">
    <property type="protein sequence ID" value="CAL84621.1"/>
    <property type="molecule type" value="Genomic_DNA"/>
</dbReference>
<dbReference type="RefSeq" id="WP_012048079.1">
    <property type="nucleotide sequence ID" value="NC_009698.1"/>
</dbReference>
<dbReference type="RefSeq" id="YP_001255550.1">
    <property type="nucleotide sequence ID" value="NC_009495.1"/>
</dbReference>
<dbReference type="RefSeq" id="YP_001388787.1">
    <property type="nucleotide sequence ID" value="NC_009698.1"/>
</dbReference>
<dbReference type="SMR" id="A5I6D9"/>
<dbReference type="GeneID" id="5187267"/>
<dbReference type="KEGG" id="cbh:CLC_2960"/>
<dbReference type="KEGG" id="cbo:CBO3058"/>
<dbReference type="PATRIC" id="fig|413999.7.peg.3036"/>
<dbReference type="HOGENOM" id="CLU_076901_1_0_9"/>
<dbReference type="PRO" id="PR:A5I6D9"/>
<dbReference type="Proteomes" id="UP000001986">
    <property type="component" value="Chromosome"/>
</dbReference>
<dbReference type="GO" id="GO:0005737">
    <property type="term" value="C:cytoplasm"/>
    <property type="evidence" value="ECO:0000318"/>
    <property type="project" value="GO_Central"/>
</dbReference>
<dbReference type="GO" id="GO:0051500">
    <property type="term" value="F:D-tyrosyl-tRNA(Tyr) deacylase activity"/>
    <property type="evidence" value="ECO:0000318"/>
    <property type="project" value="GO_Central"/>
</dbReference>
<dbReference type="GO" id="GO:0106026">
    <property type="term" value="F:Gly-tRNA(Ala) deacylase activity"/>
    <property type="evidence" value="ECO:0007669"/>
    <property type="project" value="UniProtKB-UniRule"/>
</dbReference>
<dbReference type="GO" id="GO:0043908">
    <property type="term" value="F:Ser(Gly)-tRNA(Ala) hydrolase activity"/>
    <property type="evidence" value="ECO:0007669"/>
    <property type="project" value="UniProtKB-UniRule"/>
</dbReference>
<dbReference type="GO" id="GO:0000049">
    <property type="term" value="F:tRNA binding"/>
    <property type="evidence" value="ECO:0007669"/>
    <property type="project" value="UniProtKB-UniRule"/>
</dbReference>
<dbReference type="GO" id="GO:0019478">
    <property type="term" value="P:D-amino acid catabolic process"/>
    <property type="evidence" value="ECO:0007669"/>
    <property type="project" value="UniProtKB-UniRule"/>
</dbReference>
<dbReference type="GO" id="GO:0006399">
    <property type="term" value="P:tRNA metabolic process"/>
    <property type="evidence" value="ECO:0000318"/>
    <property type="project" value="GO_Central"/>
</dbReference>
<dbReference type="CDD" id="cd00563">
    <property type="entry name" value="Dtyr_deacylase"/>
    <property type="match status" value="1"/>
</dbReference>
<dbReference type="FunFam" id="3.50.80.10:FF:000001">
    <property type="entry name" value="D-aminoacyl-tRNA deacylase"/>
    <property type="match status" value="1"/>
</dbReference>
<dbReference type="Gene3D" id="3.50.80.10">
    <property type="entry name" value="D-tyrosyl-tRNA(Tyr) deacylase"/>
    <property type="match status" value="1"/>
</dbReference>
<dbReference type="HAMAP" id="MF_00518">
    <property type="entry name" value="Deacylase_Dtd"/>
    <property type="match status" value="1"/>
</dbReference>
<dbReference type="InterPro" id="IPR003732">
    <property type="entry name" value="Daa-tRNA_deacyls_DTD"/>
</dbReference>
<dbReference type="InterPro" id="IPR023509">
    <property type="entry name" value="DTD-like_sf"/>
</dbReference>
<dbReference type="NCBIfam" id="TIGR00256">
    <property type="entry name" value="D-aminoacyl-tRNA deacylase"/>
    <property type="match status" value="1"/>
</dbReference>
<dbReference type="PANTHER" id="PTHR10472:SF5">
    <property type="entry name" value="D-AMINOACYL-TRNA DEACYLASE 1"/>
    <property type="match status" value="1"/>
</dbReference>
<dbReference type="PANTHER" id="PTHR10472">
    <property type="entry name" value="D-TYROSYL-TRNA TYR DEACYLASE"/>
    <property type="match status" value="1"/>
</dbReference>
<dbReference type="Pfam" id="PF02580">
    <property type="entry name" value="Tyr_Deacylase"/>
    <property type="match status" value="1"/>
</dbReference>
<dbReference type="SUPFAM" id="SSF69500">
    <property type="entry name" value="DTD-like"/>
    <property type="match status" value="1"/>
</dbReference>
<keyword id="KW-0963">Cytoplasm</keyword>
<keyword id="KW-0378">Hydrolase</keyword>
<keyword id="KW-1185">Reference proteome</keyword>
<keyword id="KW-0694">RNA-binding</keyword>
<keyword id="KW-0820">tRNA-binding</keyword>
<name>DTD_CLOBH</name>
<sequence length="149" mass="16676">MRAVVQRVISSKVEVDGRVIGSIGKGLNVLLGISKEDTEEDIKYLKEKIINLRIFEDENEKLNKSLLDIGGDIIIVSQFTLYGDCRKGRRPSFIEALGGEEAYILYNKFVESIKKEVNNVATGEFGADMKVYIENDGPVTILLDSKKTF</sequence>